<comment type="function">
    <text evidence="1">Involved in basal defense against virulent oomycetes. Might be related to the phospholipid scramblase and tubby-like superfamily of membrane tethered transcription factors (By similarity).</text>
</comment>
<comment type="alternative products">
    <event type="alternative splicing"/>
    <isoform>
        <id>Q9ZQR8-1</id>
        <name>1</name>
        <sequence type="displayed"/>
    </isoform>
    <isoform>
        <id>Q9ZQR8-2</id>
        <name>2</name>
        <sequence type="described" ref="VSP_039830 VSP_039831"/>
    </isoform>
</comment>
<comment type="tissue specificity">
    <text>Limited to discrete pathogen infection sites in leaves.</text>
</comment>
<comment type="induction">
    <text evidence="2">Up-regulated upon infection by oomycetes, but not by bacterial or fungal pathogens.</text>
</comment>
<comment type="disruption phenotype">
    <text evidence="2">No visible phenotype. Reduced basal and R-protein-mediated disease resistances.</text>
</comment>
<comment type="similarity">
    <text evidence="4">Belongs to the LOR family.</text>
</comment>
<keyword id="KW-0025">Alternative splicing</keyword>
<keyword id="KW-1185">Reference proteome</keyword>
<evidence type="ECO:0000250" key="1"/>
<evidence type="ECO:0000269" key="2">
    <source>
    </source>
</evidence>
<evidence type="ECO:0000303" key="3">
    <source>
    </source>
</evidence>
<evidence type="ECO:0000305" key="4"/>
<feature type="chain" id="PRO_0000399232" description="Protein LURP1">
    <location>
        <begin position="1"/>
        <end position="207"/>
    </location>
</feature>
<feature type="splice variant" id="VSP_039830" description="In isoform 2." evidence="3">
    <original>MCGKQTMRGFFFGKDHFSVTVDKNVDYAF</original>
    <variation>VNKLSFLIFVLEDSILHVNVYIIYFLN</variation>
    <location>
        <begin position="151"/>
        <end position="179"/>
    </location>
</feature>
<feature type="splice variant" id="VSP_039831" description="In isoform 2." evidence="3">
    <location>
        <begin position="180"/>
        <end position="207"/>
    </location>
</feature>
<feature type="sequence conflict" description="In Ref. 3; AAL49886." evidence="4" ref="3">
    <original>G</original>
    <variation>E</variation>
    <location>
        <position position="73"/>
    </location>
</feature>
<sequence>MQQPCVIVGSKYCSPNPVGLAIVRKVMKITDGNFVITSADGKLLFKVKDPLFSLHGKRILLDCSGAKVLTLRGKMMTMHDRWQVFRGGSTEEGALLYTVKRSSMIQLAPKLEVFLANNVEEKICDFKVKGAWLDDSCVVYAGDSDTIIAHMCGKQTMRGFFFGKDHFSVTVDKNVDYAFIASLIVILVEIEKAGFITKMTTQMIIGF</sequence>
<proteinExistence type="evidence at transcript level"/>
<reference key="1">
    <citation type="journal article" date="1999" name="Nature">
        <title>Sequence and analysis of chromosome 2 of the plant Arabidopsis thaliana.</title>
        <authorList>
            <person name="Lin X."/>
            <person name="Kaul S."/>
            <person name="Rounsley S.D."/>
            <person name="Shea T.P."/>
            <person name="Benito M.-I."/>
            <person name="Town C.D."/>
            <person name="Fujii C.Y."/>
            <person name="Mason T.M."/>
            <person name="Bowman C.L."/>
            <person name="Barnstead M.E."/>
            <person name="Feldblyum T.V."/>
            <person name="Buell C.R."/>
            <person name="Ketchum K.A."/>
            <person name="Lee J.J."/>
            <person name="Ronning C.M."/>
            <person name="Koo H.L."/>
            <person name="Moffat K.S."/>
            <person name="Cronin L.A."/>
            <person name="Shen M."/>
            <person name="Pai G."/>
            <person name="Van Aken S."/>
            <person name="Umayam L."/>
            <person name="Tallon L.J."/>
            <person name="Gill J.E."/>
            <person name="Adams M.D."/>
            <person name="Carrera A.J."/>
            <person name="Creasy T.H."/>
            <person name="Goodman H.M."/>
            <person name="Somerville C.R."/>
            <person name="Copenhaver G.P."/>
            <person name="Preuss D."/>
            <person name="Nierman W.C."/>
            <person name="White O."/>
            <person name="Eisen J.A."/>
            <person name="Salzberg S.L."/>
            <person name="Fraser C.M."/>
            <person name="Venter J.C."/>
        </authorList>
    </citation>
    <scope>NUCLEOTIDE SEQUENCE [LARGE SCALE GENOMIC DNA]</scope>
    <source>
        <strain>cv. Columbia</strain>
    </source>
</reference>
<reference key="2">
    <citation type="journal article" date="2017" name="Plant J.">
        <title>Araport11: a complete reannotation of the Arabidopsis thaliana reference genome.</title>
        <authorList>
            <person name="Cheng C.Y."/>
            <person name="Krishnakumar V."/>
            <person name="Chan A.P."/>
            <person name="Thibaud-Nissen F."/>
            <person name="Schobel S."/>
            <person name="Town C.D."/>
        </authorList>
    </citation>
    <scope>GENOME REANNOTATION</scope>
    <source>
        <strain>cv. Columbia</strain>
    </source>
</reference>
<reference key="3">
    <citation type="journal article" date="2003" name="Science">
        <title>Empirical analysis of transcriptional activity in the Arabidopsis genome.</title>
        <authorList>
            <person name="Yamada K."/>
            <person name="Lim J."/>
            <person name="Dale J.M."/>
            <person name="Chen H."/>
            <person name="Shinn P."/>
            <person name="Palm C.J."/>
            <person name="Southwick A.M."/>
            <person name="Wu H.C."/>
            <person name="Kim C.J."/>
            <person name="Nguyen M."/>
            <person name="Pham P.K."/>
            <person name="Cheuk R.F."/>
            <person name="Karlin-Newmann G."/>
            <person name="Liu S.X."/>
            <person name="Lam B."/>
            <person name="Sakano H."/>
            <person name="Wu T."/>
            <person name="Yu G."/>
            <person name="Miranda M."/>
            <person name="Quach H.L."/>
            <person name="Tripp M."/>
            <person name="Chang C.H."/>
            <person name="Lee J.M."/>
            <person name="Toriumi M.J."/>
            <person name="Chan M.M."/>
            <person name="Tang C.C."/>
            <person name="Onodera C.S."/>
            <person name="Deng J.M."/>
            <person name="Akiyama K."/>
            <person name="Ansari Y."/>
            <person name="Arakawa T."/>
            <person name="Banh J."/>
            <person name="Banno F."/>
            <person name="Bowser L."/>
            <person name="Brooks S.Y."/>
            <person name="Carninci P."/>
            <person name="Chao Q."/>
            <person name="Choy N."/>
            <person name="Enju A."/>
            <person name="Goldsmith A.D."/>
            <person name="Gurjal M."/>
            <person name="Hansen N.F."/>
            <person name="Hayashizaki Y."/>
            <person name="Johnson-Hopson C."/>
            <person name="Hsuan V.W."/>
            <person name="Iida K."/>
            <person name="Karnes M."/>
            <person name="Khan S."/>
            <person name="Koesema E."/>
            <person name="Ishida J."/>
            <person name="Jiang P.X."/>
            <person name="Jones T."/>
            <person name="Kawai J."/>
            <person name="Kamiya A."/>
            <person name="Meyers C."/>
            <person name="Nakajima M."/>
            <person name="Narusaka M."/>
            <person name="Seki M."/>
            <person name="Sakurai T."/>
            <person name="Satou M."/>
            <person name="Tamse R."/>
            <person name="Vaysberg M."/>
            <person name="Wallender E.K."/>
            <person name="Wong C."/>
            <person name="Yamamura Y."/>
            <person name="Yuan S."/>
            <person name="Shinozaki K."/>
            <person name="Davis R.W."/>
            <person name="Theologis A."/>
            <person name="Ecker J.R."/>
        </authorList>
    </citation>
    <scope>NUCLEOTIDE SEQUENCE [LARGE SCALE MRNA]</scope>
    <source>
        <strain>cv. Columbia</strain>
    </source>
</reference>
<reference key="4">
    <citation type="submission" date="2004-09" db="EMBL/GenBank/DDBJ databases">
        <title>Arabidopsis ORF clones.</title>
        <authorList>
            <person name="Cheuk R."/>
            <person name="Chen H."/>
            <person name="Kim C.J."/>
            <person name="Shinn P."/>
            <person name="Ecker J.R."/>
        </authorList>
    </citation>
    <scope>NUCLEOTIDE SEQUENCE [LARGE SCALE MRNA] (ISOFORM 1)</scope>
    <source>
        <strain>cv. Columbia</strain>
    </source>
</reference>
<reference key="5">
    <citation type="journal article" date="2009" name="DNA Res.">
        <title>Analysis of multiple occurrences of alternative splicing events in Arabidopsis thaliana using novel sequenced full-length cDNAs.</title>
        <authorList>
            <person name="Iida K."/>
            <person name="Fukami-Kobayashi K."/>
            <person name="Toyoda A."/>
            <person name="Sakaki Y."/>
            <person name="Kobayashi M."/>
            <person name="Seki M."/>
            <person name="Shinozaki K."/>
        </authorList>
    </citation>
    <scope>NUCLEOTIDE SEQUENCE [LARGE SCALE MRNA] (ISOFORM 2)</scope>
    <source>
        <strain>cv. Columbia</strain>
    </source>
</reference>
<reference key="6">
    <citation type="journal article" date="2008" name="Plant J.">
        <title>The oomycete response gene LURP1 is required for defense against Hyaloperonospora parasitica in Arabidopsis thaliana.</title>
        <authorList>
            <person name="Knoth C."/>
            <person name="Eulgem T."/>
        </authorList>
    </citation>
    <scope>INDUCTION BY OOMYCETES</scope>
    <scope>DISRUPTION PHENOTYPE</scope>
</reference>
<organism>
    <name type="scientific">Arabidopsis thaliana</name>
    <name type="common">Mouse-ear cress</name>
    <dbReference type="NCBI Taxonomy" id="3702"/>
    <lineage>
        <taxon>Eukaryota</taxon>
        <taxon>Viridiplantae</taxon>
        <taxon>Streptophyta</taxon>
        <taxon>Embryophyta</taxon>
        <taxon>Tracheophyta</taxon>
        <taxon>Spermatophyta</taxon>
        <taxon>Magnoliopsida</taxon>
        <taxon>eudicotyledons</taxon>
        <taxon>Gunneridae</taxon>
        <taxon>Pentapetalae</taxon>
        <taxon>rosids</taxon>
        <taxon>malvids</taxon>
        <taxon>Brassicales</taxon>
        <taxon>Brassicaceae</taxon>
        <taxon>Camelineae</taxon>
        <taxon>Arabidopsis</taxon>
    </lineage>
</organism>
<protein>
    <recommendedName>
        <fullName>Protein LURP1</fullName>
    </recommendedName>
    <alternativeName>
        <fullName>Protein LATE UPREGULATED IN RESPONSE TO HYALOPERONOSPORA PARASITICA 1</fullName>
    </alternativeName>
</protein>
<dbReference type="EMBL" id="AC006067">
    <property type="protein sequence ID" value="AAD15461.1"/>
    <property type="molecule type" value="Genomic_DNA"/>
</dbReference>
<dbReference type="EMBL" id="CP002685">
    <property type="protein sequence ID" value="AEC06312.1"/>
    <property type="molecule type" value="Genomic_DNA"/>
</dbReference>
<dbReference type="EMBL" id="AY070390">
    <property type="protein sequence ID" value="AAL49886.1"/>
    <property type="molecule type" value="mRNA"/>
</dbReference>
<dbReference type="EMBL" id="BT015680">
    <property type="protein sequence ID" value="AAU15179.1"/>
    <property type="molecule type" value="mRNA"/>
</dbReference>
<dbReference type="EMBL" id="AK317043">
    <property type="protein sequence ID" value="BAH19736.1"/>
    <property type="molecule type" value="mRNA"/>
</dbReference>
<dbReference type="PIR" id="F84518">
    <property type="entry name" value="F84518"/>
</dbReference>
<dbReference type="RefSeq" id="NP_179062.1">
    <molecule id="Q9ZQR8-1"/>
    <property type="nucleotide sequence ID" value="NM_127019.4"/>
</dbReference>
<dbReference type="RefSeq" id="NP_973456.1">
    <property type="nucleotide sequence ID" value="NM_201727.3"/>
</dbReference>
<dbReference type="SMR" id="Q9ZQR8"/>
<dbReference type="FunCoup" id="Q9ZQR8">
    <property type="interactions" value="7"/>
</dbReference>
<dbReference type="STRING" id="3702.Q9ZQR8"/>
<dbReference type="PaxDb" id="3702-AT2G14560.1"/>
<dbReference type="ProteomicsDB" id="238638">
    <molecule id="Q9ZQR8-1"/>
</dbReference>
<dbReference type="EnsemblPlants" id="AT2G14560.1">
    <molecule id="Q9ZQR8-1"/>
    <property type="protein sequence ID" value="AT2G14560.1"/>
    <property type="gene ID" value="AT2G14560"/>
</dbReference>
<dbReference type="GeneID" id="815943"/>
<dbReference type="Gramene" id="AT2G14560.1">
    <molecule id="Q9ZQR8-1"/>
    <property type="protein sequence ID" value="AT2G14560.1"/>
    <property type="gene ID" value="AT2G14560"/>
</dbReference>
<dbReference type="KEGG" id="ath:AT2G14560"/>
<dbReference type="Araport" id="AT2G14560"/>
<dbReference type="TAIR" id="AT2G14560">
    <property type="gene designation" value="LURP1"/>
</dbReference>
<dbReference type="eggNOG" id="ENOG502QUU9">
    <property type="taxonomic scope" value="Eukaryota"/>
</dbReference>
<dbReference type="HOGENOM" id="CLU_063146_5_1_1"/>
<dbReference type="InParanoid" id="Q9ZQR8"/>
<dbReference type="OMA" id="EEEQWNF"/>
<dbReference type="OrthoDB" id="10285197at2759"/>
<dbReference type="PhylomeDB" id="Q9ZQR8"/>
<dbReference type="PRO" id="PR:Q9ZQR8"/>
<dbReference type="Proteomes" id="UP000006548">
    <property type="component" value="Chromosome 2"/>
</dbReference>
<dbReference type="ExpressionAtlas" id="Q9ZQR8">
    <property type="expression patterns" value="baseline and differential"/>
</dbReference>
<dbReference type="GO" id="GO:0005739">
    <property type="term" value="C:mitochondrion"/>
    <property type="evidence" value="ECO:0007005"/>
    <property type="project" value="TAIR"/>
</dbReference>
<dbReference type="GO" id="GO:0050832">
    <property type="term" value="P:defense response to fungus"/>
    <property type="evidence" value="ECO:0000315"/>
    <property type="project" value="TAIR"/>
</dbReference>
<dbReference type="GO" id="GO:0009751">
    <property type="term" value="P:response to salicylic acid"/>
    <property type="evidence" value="ECO:0000270"/>
    <property type="project" value="TAIR"/>
</dbReference>
<dbReference type="FunFam" id="2.40.160.200:FF:000001">
    <property type="entry name" value="LURP-one-like protein (DUF567)"/>
    <property type="match status" value="1"/>
</dbReference>
<dbReference type="Gene3D" id="2.40.160.200">
    <property type="entry name" value="LURP1-related"/>
    <property type="match status" value="1"/>
</dbReference>
<dbReference type="InterPro" id="IPR007612">
    <property type="entry name" value="LOR"/>
</dbReference>
<dbReference type="InterPro" id="IPR038595">
    <property type="entry name" value="LOR_sf"/>
</dbReference>
<dbReference type="InterPro" id="IPR025659">
    <property type="entry name" value="Tubby-like_C"/>
</dbReference>
<dbReference type="PANTHER" id="PTHR31087">
    <property type="match status" value="1"/>
</dbReference>
<dbReference type="PANTHER" id="PTHR31087:SF160">
    <property type="entry name" value="PROTEIN LURP-ONE-RELATED 1-RELATED"/>
    <property type="match status" value="1"/>
</dbReference>
<dbReference type="Pfam" id="PF04525">
    <property type="entry name" value="LOR"/>
    <property type="match status" value="1"/>
</dbReference>
<dbReference type="SUPFAM" id="SSF54518">
    <property type="entry name" value="Tubby C-terminal domain-like"/>
    <property type="match status" value="1"/>
</dbReference>
<gene>
    <name type="primary">LURP1</name>
    <name type="ordered locus">At2g14560</name>
    <name type="ORF">T13P21.6</name>
</gene>
<name>LURP1_ARATH</name>
<accession>Q9ZQR8</accession>
<accession>Q3EC09</accession>
<accession>Q8VYP1</accession>